<organism>
    <name type="scientific">Drosophila virilis</name>
    <name type="common">Fruit fly</name>
    <dbReference type="NCBI Taxonomy" id="7244"/>
    <lineage>
        <taxon>Eukaryota</taxon>
        <taxon>Metazoa</taxon>
        <taxon>Ecdysozoa</taxon>
        <taxon>Arthropoda</taxon>
        <taxon>Hexapoda</taxon>
        <taxon>Insecta</taxon>
        <taxon>Pterygota</taxon>
        <taxon>Neoptera</taxon>
        <taxon>Endopterygota</taxon>
        <taxon>Diptera</taxon>
        <taxon>Brachycera</taxon>
        <taxon>Muscomorpha</taxon>
        <taxon>Ephydroidea</taxon>
        <taxon>Drosophilidae</taxon>
        <taxon>Drosophila</taxon>
    </lineage>
</organism>
<reference key="1">
    <citation type="journal article" date="1989" name="J. Mol. Evol.">
        <title>Evolution of the autosomal chorion cluster in Drosophila. II. Chorion gene expression and sequence comparisons of the s16 and s19 genes in evolutionarily distant species.</title>
        <authorList>
            <person name="Fenerjian M.G."/>
            <person name="Martinez-Cruzado J.C."/>
            <person name="Swimmer C."/>
            <person name="King D."/>
            <person name="Kafatos F.C."/>
        </authorList>
    </citation>
    <scope>NUCLEOTIDE SEQUENCE [GENOMIC DNA]</scope>
</reference>
<gene>
    <name type="primary">Cp19</name>
    <name type="synonym">S19</name>
</gene>
<feature type="signal peptide" evidence="2">
    <location>
        <begin position="1"/>
        <end position="16"/>
    </location>
</feature>
<feature type="chain" id="PRO_0000089627" description="Chorion protein S19">
    <location>
        <begin position="17"/>
        <end position="198"/>
    </location>
</feature>
<sequence length="198" mass="20663">MNKFATLAVFISVCLAVGSCNYGGQHAGHGYGHHRSISSYGQRGDGSAAAASSAAAAGGNDQRPVEIVAGPRYGGSEQLRPILLDSGYQGGHNEYGRGHGNIGHLVGGGSYGGHIAGGNHGGNYGGHQRGYGRPRWSVQPAGTTLLYPGQNSYRRYASPPEYTKVVLPVRAAPPVAKLYLPENNYGSHGGYHNEGPKY</sequence>
<dbReference type="EMBL" id="X53421">
    <property type="protein sequence ID" value="CAA37502.1"/>
    <property type="molecule type" value="Genomic_DNA"/>
</dbReference>
<dbReference type="PIR" id="C32998">
    <property type="entry name" value="C32998"/>
</dbReference>
<dbReference type="eggNOG" id="ENOG502S3GF">
    <property type="taxonomic scope" value="Eukaryota"/>
</dbReference>
<dbReference type="OrthoDB" id="7859712at2759"/>
<dbReference type="GO" id="GO:0042600">
    <property type="term" value="C:egg chorion"/>
    <property type="evidence" value="ECO:0007669"/>
    <property type="project" value="InterPro"/>
</dbReference>
<dbReference type="GO" id="GO:0005576">
    <property type="term" value="C:extracellular region"/>
    <property type="evidence" value="ECO:0007669"/>
    <property type="project" value="UniProtKB-SubCell"/>
</dbReference>
<dbReference type="GO" id="GO:0007304">
    <property type="term" value="P:chorion-containing eggshell formation"/>
    <property type="evidence" value="ECO:0007669"/>
    <property type="project" value="EnsemblMetazoa"/>
</dbReference>
<dbReference type="InterPro" id="IPR005649">
    <property type="entry name" value="Chorion_2"/>
</dbReference>
<dbReference type="Pfam" id="PF03964">
    <property type="entry name" value="Chorion_2"/>
    <property type="match status" value="1"/>
</dbReference>
<name>CH19_DROVI</name>
<protein>
    <recommendedName>
        <fullName>Chorion protein S19</fullName>
    </recommendedName>
</protein>
<comment type="function">
    <text evidence="1">Chorion membrane (egg shell) protein; plays a role in protecting the egg from the environment.</text>
</comment>
<comment type="subcellular location">
    <subcellularLocation>
        <location evidence="3">Secreted</location>
    </subcellularLocation>
</comment>
<comment type="similarity">
    <text evidence="3">Belongs to the chorion protein S19 family.</text>
</comment>
<evidence type="ECO:0000250" key="1"/>
<evidence type="ECO:0000255" key="2"/>
<evidence type="ECO:0000305" key="3"/>
<proteinExistence type="inferred from homology"/>
<keyword id="KW-0964">Secreted</keyword>
<keyword id="KW-0732">Signal</keyword>
<accession>P24516</accession>